<evidence type="ECO:0000250" key="1"/>
<evidence type="ECO:0000255" key="2"/>
<evidence type="ECO:0000269" key="3">
    <source>
    </source>
</evidence>
<evidence type="ECO:0000305" key="4"/>
<evidence type="ECO:0007829" key="5">
    <source>
        <dbReference type="PDB" id="2Y9M"/>
    </source>
</evidence>
<evidence type="ECO:0007829" key="6">
    <source>
        <dbReference type="PDB" id="2Y9P"/>
    </source>
</evidence>
<name>PEX22_YEAST</name>
<keyword id="KW-0002">3D-structure</keyword>
<keyword id="KW-0472">Membrane</keyword>
<keyword id="KW-0576">Peroxisome</keyword>
<keyword id="KW-0962">Peroxisome biogenesis</keyword>
<keyword id="KW-1185">Reference proteome</keyword>
<keyword id="KW-0812">Transmembrane</keyword>
<keyword id="KW-1133">Transmembrane helix</keyword>
<dbReference type="EMBL" id="U12980">
    <property type="protein sequence ID" value="AAC04978.1"/>
    <property type="molecule type" value="Genomic_DNA"/>
</dbReference>
<dbReference type="EMBL" id="AY558167">
    <property type="protein sequence ID" value="AAS56493.1"/>
    <property type="molecule type" value="Genomic_DNA"/>
</dbReference>
<dbReference type="EMBL" id="BK006935">
    <property type="protein sequence ID" value="DAA06933.1"/>
    <property type="molecule type" value="Genomic_DNA"/>
</dbReference>
<dbReference type="PIR" id="S51966">
    <property type="entry name" value="S51966"/>
</dbReference>
<dbReference type="RefSeq" id="NP_009346.1">
    <property type="nucleotide sequence ID" value="NM_001178198.1"/>
</dbReference>
<dbReference type="PDB" id="2Y9M">
    <property type="method" value="X-ray"/>
    <property type="resolution" value="2.60 A"/>
    <property type="chains" value="B=54-180"/>
</dbReference>
<dbReference type="PDB" id="2Y9P">
    <property type="method" value="X-ray"/>
    <property type="resolution" value="3.25 A"/>
    <property type="chains" value="B=54-180"/>
</dbReference>
<dbReference type="PDB" id="4BWF">
    <property type="method" value="X-ray"/>
    <property type="resolution" value="3.23 A"/>
    <property type="chains" value="B=54-180"/>
</dbReference>
<dbReference type="PDBsum" id="2Y9M"/>
<dbReference type="PDBsum" id="2Y9P"/>
<dbReference type="PDBsum" id="4BWF"/>
<dbReference type="SMR" id="P39718"/>
<dbReference type="BioGRID" id="31774">
    <property type="interactions" value="218"/>
</dbReference>
<dbReference type="DIP" id="DIP-2791N"/>
<dbReference type="FunCoup" id="P39718">
    <property type="interactions" value="35"/>
</dbReference>
<dbReference type="IntAct" id="P39718">
    <property type="interactions" value="4"/>
</dbReference>
<dbReference type="MINT" id="P39718"/>
<dbReference type="STRING" id="4932.YAL055W"/>
<dbReference type="TCDB" id="3.A.20.1.5">
    <property type="family name" value="the peroxisomal protein importer (ppi) family"/>
</dbReference>
<dbReference type="PaxDb" id="4932-YAL055W"/>
<dbReference type="PeptideAtlas" id="P39718"/>
<dbReference type="EnsemblFungi" id="YAL055W_mRNA">
    <property type="protein sequence ID" value="YAL055W"/>
    <property type="gene ID" value="YAL055W"/>
</dbReference>
<dbReference type="GeneID" id="851244"/>
<dbReference type="KEGG" id="sce:YAL055W"/>
<dbReference type="AGR" id="SGD:S000000051"/>
<dbReference type="SGD" id="S000000051">
    <property type="gene designation" value="PEX22"/>
</dbReference>
<dbReference type="VEuPathDB" id="FungiDB:YAL055W"/>
<dbReference type="eggNOG" id="ENOG502SFA5">
    <property type="taxonomic scope" value="Eukaryota"/>
</dbReference>
<dbReference type="HOGENOM" id="CLU_121063_0_0_1"/>
<dbReference type="InParanoid" id="P39718"/>
<dbReference type="OMA" id="GMWACVK"/>
<dbReference type="OrthoDB" id="4036401at2759"/>
<dbReference type="BioCyc" id="YEAST:G3O-28859-MONOMER"/>
<dbReference type="BioGRID-ORCS" id="851244">
    <property type="hits" value="0 hits in 10 CRISPR screens"/>
</dbReference>
<dbReference type="EvolutionaryTrace" id="P39718"/>
<dbReference type="PRO" id="PR:P39718"/>
<dbReference type="Proteomes" id="UP000002311">
    <property type="component" value="Chromosome I"/>
</dbReference>
<dbReference type="RNAct" id="P39718">
    <property type="molecule type" value="protein"/>
</dbReference>
<dbReference type="GO" id="GO:0005737">
    <property type="term" value="C:cytoplasm"/>
    <property type="evidence" value="ECO:0007005"/>
    <property type="project" value="SGD"/>
</dbReference>
<dbReference type="GO" id="GO:0005778">
    <property type="term" value="C:peroxisomal membrane"/>
    <property type="evidence" value="ECO:0007669"/>
    <property type="project" value="UniProtKB-SubCell"/>
</dbReference>
<dbReference type="GO" id="GO:0097027">
    <property type="term" value="F:ubiquitin-protein transferase activator activity"/>
    <property type="evidence" value="ECO:0000314"/>
    <property type="project" value="SGD"/>
</dbReference>
<dbReference type="GO" id="GO:1902499">
    <property type="term" value="P:positive regulation of protein autoubiquitination"/>
    <property type="evidence" value="ECO:0000314"/>
    <property type="project" value="SGD"/>
</dbReference>
<dbReference type="GO" id="GO:0031398">
    <property type="term" value="P:positive regulation of protein ubiquitination"/>
    <property type="evidence" value="ECO:0000314"/>
    <property type="project" value="SGD"/>
</dbReference>
<dbReference type="GO" id="GO:0016562">
    <property type="term" value="P:protein import into peroxisome matrix, receptor recycling"/>
    <property type="evidence" value="ECO:0000315"/>
    <property type="project" value="SGD"/>
</dbReference>
<dbReference type="Gene3D" id="3.40.50.11730">
    <property type="entry name" value="Peroxisome assembly protein 22"/>
    <property type="match status" value="1"/>
</dbReference>
<dbReference type="InterPro" id="IPR024359">
    <property type="entry name" value="Peroxin-22"/>
</dbReference>
<dbReference type="InterPro" id="IPR038613">
    <property type="entry name" value="Peroxin-22_C_sf"/>
</dbReference>
<dbReference type="Pfam" id="PF12827">
    <property type="entry name" value="Peroxin-22"/>
    <property type="match status" value="1"/>
</dbReference>
<sequence length="180" mass="19877">MPPPSRSRINKTRTLGIVGTAIAVLVTSYYIYQKVTSAKEDNGARPPEGDSVKENKKARKSKCIIMSKSIQGLPIKWEEYAADEVVLLVPTSHTDGSMKQAIGDAFRKTKNEHKIIYCDSMDGLWSCVRRLGKFQCILNSRDFTSSGGSDAAVVPEDIGRFVKFVVDSDVEDVLIDTLCN</sequence>
<gene>
    <name type="primary">PEX22</name>
    <name type="ordered locus">YAL055W</name>
</gene>
<organism>
    <name type="scientific">Saccharomyces cerevisiae (strain ATCC 204508 / S288c)</name>
    <name type="common">Baker's yeast</name>
    <dbReference type="NCBI Taxonomy" id="559292"/>
    <lineage>
        <taxon>Eukaryota</taxon>
        <taxon>Fungi</taxon>
        <taxon>Dikarya</taxon>
        <taxon>Ascomycota</taxon>
        <taxon>Saccharomycotina</taxon>
        <taxon>Saccharomycetes</taxon>
        <taxon>Saccharomycetales</taxon>
        <taxon>Saccharomycetaceae</taxon>
        <taxon>Saccharomyces</taxon>
    </lineage>
</organism>
<protein>
    <recommendedName>
        <fullName>Peroxisome assembly protein 22</fullName>
    </recommendedName>
    <alternativeName>
        <fullName>Peroxin-22</fullName>
    </alternativeName>
</protein>
<feature type="chain" id="PRO_0000058339" description="Peroxisome assembly protein 22">
    <location>
        <begin position="1"/>
        <end position="180"/>
    </location>
</feature>
<feature type="transmembrane region" description="Helical" evidence="2">
    <location>
        <begin position="15"/>
        <end position="32"/>
    </location>
</feature>
<feature type="strand" evidence="5">
    <location>
        <begin position="62"/>
        <end position="65"/>
    </location>
</feature>
<feature type="helix" evidence="5">
    <location>
        <begin position="68"/>
        <end position="71"/>
    </location>
</feature>
<feature type="helix" evidence="5">
    <location>
        <begin position="77"/>
        <end position="79"/>
    </location>
</feature>
<feature type="turn" evidence="5">
    <location>
        <begin position="80"/>
        <end position="82"/>
    </location>
</feature>
<feature type="strand" evidence="5">
    <location>
        <begin position="83"/>
        <end position="90"/>
    </location>
</feature>
<feature type="turn" evidence="5">
    <location>
        <begin position="91"/>
        <end position="93"/>
    </location>
</feature>
<feature type="strand" evidence="5">
    <location>
        <begin position="94"/>
        <end position="97"/>
    </location>
</feature>
<feature type="helix" evidence="5">
    <location>
        <begin position="100"/>
        <end position="107"/>
    </location>
</feature>
<feature type="turn" evidence="5">
    <location>
        <begin position="108"/>
        <end position="110"/>
    </location>
</feature>
<feature type="helix" evidence="5">
    <location>
        <begin position="112"/>
        <end position="114"/>
    </location>
</feature>
<feature type="strand" evidence="5">
    <location>
        <begin position="115"/>
        <end position="119"/>
    </location>
</feature>
<feature type="helix" evidence="5">
    <location>
        <begin position="121"/>
        <end position="131"/>
    </location>
</feature>
<feature type="strand" evidence="5">
    <location>
        <begin position="134"/>
        <end position="138"/>
    </location>
</feature>
<feature type="helix" evidence="5">
    <location>
        <begin position="140"/>
        <end position="142"/>
    </location>
</feature>
<feature type="strand" evidence="6">
    <location>
        <begin position="145"/>
        <end position="148"/>
    </location>
</feature>
<feature type="helix" evidence="6">
    <location>
        <begin position="151"/>
        <end position="153"/>
    </location>
</feature>
<feature type="helix" evidence="5">
    <location>
        <begin position="158"/>
        <end position="160"/>
    </location>
</feature>
<feature type="strand" evidence="5">
    <location>
        <begin position="163"/>
        <end position="167"/>
    </location>
</feature>
<feature type="helix" evidence="5">
    <location>
        <begin position="171"/>
        <end position="179"/>
    </location>
</feature>
<reference key="1">
    <citation type="journal article" date="1995" name="Proc. Natl. Acad. Sci. U.S.A.">
        <title>The nucleotide sequence of chromosome I from Saccharomyces cerevisiae.</title>
        <authorList>
            <person name="Bussey H."/>
            <person name="Kaback D.B."/>
            <person name="Zhong W.-W."/>
            <person name="Vo D.H."/>
            <person name="Clark M.W."/>
            <person name="Fortin N."/>
            <person name="Hall J."/>
            <person name="Ouellette B.F.F."/>
            <person name="Keng T."/>
            <person name="Barton A.B."/>
            <person name="Su Y."/>
            <person name="Davies C.J."/>
            <person name="Storms R.K."/>
        </authorList>
    </citation>
    <scope>NUCLEOTIDE SEQUENCE [LARGE SCALE GENOMIC DNA]</scope>
    <source>
        <strain>ATCC 204508 / S288c</strain>
    </source>
</reference>
<reference key="2">
    <citation type="journal article" date="2014" name="G3 (Bethesda)">
        <title>The reference genome sequence of Saccharomyces cerevisiae: Then and now.</title>
        <authorList>
            <person name="Engel S.R."/>
            <person name="Dietrich F.S."/>
            <person name="Fisk D.G."/>
            <person name="Binkley G."/>
            <person name="Balakrishnan R."/>
            <person name="Costanzo M.C."/>
            <person name="Dwight S.S."/>
            <person name="Hitz B.C."/>
            <person name="Karra K."/>
            <person name="Nash R.S."/>
            <person name="Weng S."/>
            <person name="Wong E.D."/>
            <person name="Lloyd P."/>
            <person name="Skrzypek M.S."/>
            <person name="Miyasato S.R."/>
            <person name="Simison M."/>
            <person name="Cherry J.M."/>
        </authorList>
    </citation>
    <scope>GENOME REANNOTATION</scope>
    <source>
        <strain>ATCC 204508 / S288c</strain>
    </source>
</reference>
<reference key="3">
    <citation type="journal article" date="2007" name="Genome Res.">
        <title>Approaching a complete repository of sequence-verified protein-encoding clones for Saccharomyces cerevisiae.</title>
        <authorList>
            <person name="Hu Y."/>
            <person name="Rolfs A."/>
            <person name="Bhullar B."/>
            <person name="Murthy T.V.S."/>
            <person name="Zhu C."/>
            <person name="Berger M.F."/>
            <person name="Camargo A.A."/>
            <person name="Kelley F."/>
            <person name="McCarron S."/>
            <person name="Jepson D."/>
            <person name="Richardson A."/>
            <person name="Raphael J."/>
            <person name="Moreira D."/>
            <person name="Taycher E."/>
            <person name="Zuo D."/>
            <person name="Mohr S."/>
            <person name="Kane M.F."/>
            <person name="Williamson J."/>
            <person name="Simpson A.J.G."/>
            <person name="Bulyk M.L."/>
            <person name="Harlow E."/>
            <person name="Marsischky G."/>
            <person name="Kolodner R.D."/>
            <person name="LaBaer J."/>
        </authorList>
    </citation>
    <scope>NUCLEOTIDE SEQUENCE [GENOMIC DNA]</scope>
    <source>
        <strain>ATCC 204508 / S288c</strain>
    </source>
</reference>
<reference key="4">
    <citation type="journal article" date="1999" name="J. Cell Biol.">
        <title>Pex22p of Pichia pastoris, essential for peroxisomal matrix protein import, anchors the ubiquitin-conjugating enzyme, Pex4p, on the peroxisomal membrane.</title>
        <authorList>
            <person name="Koller A."/>
            <person name="Snyder W.B."/>
            <person name="Faber K.N."/>
            <person name="Wenzel T.J."/>
            <person name="Rangell L."/>
            <person name="Keller G.A."/>
            <person name="Subramani S."/>
        </authorList>
    </citation>
    <scope>IDENTIFICATION AS PEX22</scope>
</reference>
<reference key="5">
    <citation type="journal article" date="2003" name="Nature">
        <title>Global analysis of protein expression in yeast.</title>
        <authorList>
            <person name="Ghaemmaghami S."/>
            <person name="Huh W.-K."/>
            <person name="Bower K."/>
            <person name="Howson R.W."/>
            <person name="Belle A."/>
            <person name="Dephoure N."/>
            <person name="O'Shea E.K."/>
            <person name="Weissman J.S."/>
        </authorList>
    </citation>
    <scope>LEVEL OF PROTEIN EXPRESSION [LARGE SCALE ANALYSIS]</scope>
</reference>
<proteinExistence type="evidence at protein level"/>
<comment type="function">
    <text evidence="1">Involved in peroxisome biogenesis.</text>
</comment>
<comment type="interaction">
    <interactant intactId="EBI-20707">
        <id>P39718</id>
    </interactant>
    <interactant intactId="EBI-19784">
        <id>P29340</id>
        <label>PEX4</label>
    </interactant>
    <organismsDiffer>false</organismsDiffer>
    <experiments>10</experiments>
</comment>
<comment type="subcellular location">
    <subcellularLocation>
        <location evidence="1">Peroxisome membrane</location>
        <topology evidence="1">Single-pass membrane protein</topology>
    </subcellularLocation>
</comment>
<comment type="miscellaneous">
    <text evidence="3">Present with 259 molecules/cell in log phase SD medium.</text>
</comment>
<comment type="similarity">
    <text evidence="4">Belongs to the peroxin-22 family.</text>
</comment>
<accession>P39718</accession>
<accession>D6VPG3</accession>